<name>RL7A_METTH</name>
<protein>
    <recommendedName>
        <fullName evidence="1">Large ribosomal subunit protein eL8</fullName>
    </recommendedName>
    <alternativeName>
        <fullName evidence="2">50S ribosomal protein L7Ae</fullName>
    </alternativeName>
    <alternativeName>
        <fullName evidence="1">Ribosomal protein L8e</fullName>
    </alternativeName>
</protein>
<comment type="function">
    <text evidence="1">Multifunctional RNA-binding protein that recognizes the K-turn motif in ribosomal RNA, the RNA component of RNase P, box H/ACA, box C/D and box C'/D' sRNAs.</text>
</comment>
<comment type="subunit">
    <text evidence="1">Part of the 50S ribosomal subunit. Probably part of the RNase P complex.</text>
</comment>
<comment type="subcellular location">
    <subcellularLocation>
        <location evidence="1">Cytoplasm</location>
    </subcellularLocation>
</comment>
<comment type="similarity">
    <text evidence="1">Belongs to the eukaryotic ribosomal protein eL8 family.</text>
</comment>
<comment type="sequence caution" evidence="2">
    <conflict type="erroneous initiation">
        <sequence resource="EMBL-CDS" id="AAB84761"/>
    </conflict>
    <text>Extended N-terminus.</text>
</comment>
<organism>
    <name type="scientific">Methanothermobacter thermautotrophicus (strain ATCC 29096 / DSM 1053 / JCM 10044 / NBRC 100330 / Delta H)</name>
    <name type="common">Methanobacterium thermoautotrophicum</name>
    <dbReference type="NCBI Taxonomy" id="187420"/>
    <lineage>
        <taxon>Archaea</taxon>
        <taxon>Methanobacteriati</taxon>
        <taxon>Methanobacteriota</taxon>
        <taxon>Methanomada group</taxon>
        <taxon>Methanobacteria</taxon>
        <taxon>Methanobacteriales</taxon>
        <taxon>Methanobacteriaceae</taxon>
        <taxon>Methanothermobacter</taxon>
    </lineage>
</organism>
<gene>
    <name evidence="1" type="primary">rpl7ae</name>
    <name type="ordered locus">MTH_255</name>
</gene>
<dbReference type="EMBL" id="AE000666">
    <property type="protein sequence ID" value="AAB84761.1"/>
    <property type="status" value="ALT_INIT"/>
    <property type="molecule type" value="Genomic_DNA"/>
</dbReference>
<dbReference type="PIR" id="A69132">
    <property type="entry name" value="A69132"/>
</dbReference>
<dbReference type="RefSeq" id="WP_048061194.1">
    <property type="nucleotide sequence ID" value="NC_000916.1"/>
</dbReference>
<dbReference type="SMR" id="O26355"/>
<dbReference type="FunCoup" id="O26355">
    <property type="interactions" value="148"/>
</dbReference>
<dbReference type="STRING" id="187420.MTH_255"/>
<dbReference type="PaxDb" id="187420-MTH_255"/>
<dbReference type="EnsemblBacteria" id="AAB84761">
    <property type="protein sequence ID" value="AAB84761"/>
    <property type="gene ID" value="MTH_255"/>
</dbReference>
<dbReference type="GeneID" id="82296729"/>
<dbReference type="KEGG" id="mth:MTH_255"/>
<dbReference type="PATRIC" id="fig|187420.15.peg.224"/>
<dbReference type="HOGENOM" id="CLU_084513_4_0_2"/>
<dbReference type="InParanoid" id="O26355"/>
<dbReference type="Proteomes" id="UP000005223">
    <property type="component" value="Chromosome"/>
</dbReference>
<dbReference type="GO" id="GO:0005737">
    <property type="term" value="C:cytoplasm"/>
    <property type="evidence" value="ECO:0007669"/>
    <property type="project" value="UniProtKB-SubCell"/>
</dbReference>
<dbReference type="GO" id="GO:1990904">
    <property type="term" value="C:ribonucleoprotein complex"/>
    <property type="evidence" value="ECO:0007669"/>
    <property type="project" value="UniProtKB-KW"/>
</dbReference>
<dbReference type="GO" id="GO:0005840">
    <property type="term" value="C:ribosome"/>
    <property type="evidence" value="ECO:0007669"/>
    <property type="project" value="UniProtKB-KW"/>
</dbReference>
<dbReference type="GO" id="GO:0004526">
    <property type="term" value="F:ribonuclease P activity"/>
    <property type="evidence" value="ECO:0007669"/>
    <property type="project" value="UniProtKB-UniRule"/>
</dbReference>
<dbReference type="GO" id="GO:0019843">
    <property type="term" value="F:rRNA binding"/>
    <property type="evidence" value="ECO:0007669"/>
    <property type="project" value="UniProtKB-KW"/>
</dbReference>
<dbReference type="GO" id="GO:0003735">
    <property type="term" value="F:structural constituent of ribosome"/>
    <property type="evidence" value="ECO:0007669"/>
    <property type="project" value="InterPro"/>
</dbReference>
<dbReference type="GO" id="GO:0006412">
    <property type="term" value="P:translation"/>
    <property type="evidence" value="ECO:0007669"/>
    <property type="project" value="UniProtKB-UniRule"/>
</dbReference>
<dbReference type="GO" id="GO:0001682">
    <property type="term" value="P:tRNA 5'-leader removal"/>
    <property type="evidence" value="ECO:0007669"/>
    <property type="project" value="UniProtKB-UniRule"/>
</dbReference>
<dbReference type="FunFam" id="3.30.1330.30:FF:000020">
    <property type="entry name" value="50S ribosomal protein L7Ae"/>
    <property type="match status" value="1"/>
</dbReference>
<dbReference type="Gene3D" id="3.30.1330.30">
    <property type="match status" value="1"/>
</dbReference>
<dbReference type="HAMAP" id="MF_00326">
    <property type="entry name" value="Ribosomal_eL8"/>
    <property type="match status" value="1"/>
</dbReference>
<dbReference type="InterPro" id="IPR050257">
    <property type="entry name" value="eL8/uL1-like"/>
</dbReference>
<dbReference type="InterPro" id="IPR029064">
    <property type="entry name" value="Ribosomal_eL30-like_sf"/>
</dbReference>
<dbReference type="InterPro" id="IPR004038">
    <property type="entry name" value="Ribosomal_eL8/eL30/eS12/Gad45"/>
</dbReference>
<dbReference type="InterPro" id="IPR018492">
    <property type="entry name" value="Ribosomal_eL8/Nhp2"/>
</dbReference>
<dbReference type="InterPro" id="IPR022481">
    <property type="entry name" value="Ribosomal_eL8_arc"/>
</dbReference>
<dbReference type="NCBIfam" id="TIGR03677">
    <property type="entry name" value="eL8_ribo"/>
    <property type="match status" value="1"/>
</dbReference>
<dbReference type="PANTHER" id="PTHR23105">
    <property type="entry name" value="RIBOSOMAL PROTEIN L7AE FAMILY MEMBER"/>
    <property type="match status" value="1"/>
</dbReference>
<dbReference type="Pfam" id="PF01248">
    <property type="entry name" value="Ribosomal_L7Ae"/>
    <property type="match status" value="1"/>
</dbReference>
<dbReference type="PRINTS" id="PR00881">
    <property type="entry name" value="L7ARS6FAMILY"/>
</dbReference>
<dbReference type="PRINTS" id="PR00884">
    <property type="entry name" value="RIBOSOMALHS6"/>
</dbReference>
<dbReference type="SUPFAM" id="SSF55315">
    <property type="entry name" value="L30e-like"/>
    <property type="match status" value="1"/>
</dbReference>
<sequence length="123" mass="13154">MAKAIYVKFDVPKELADKAAEALEIARETGKVSKGTNEVTKAVERGVAQLVLIAEDVEPAEIVAHLPLLAEEKEIPYIYIPTKDELGAAAGLNVGTASSAIVEAGDAEDLIKEIIEKVEELKK</sequence>
<feature type="chain" id="PRO_0000136797" description="Large ribosomal subunit protein eL8">
    <location>
        <begin position="1"/>
        <end position="123"/>
    </location>
</feature>
<keyword id="KW-0963">Cytoplasm</keyword>
<keyword id="KW-1185">Reference proteome</keyword>
<keyword id="KW-0687">Ribonucleoprotein</keyword>
<keyword id="KW-0689">Ribosomal protein</keyword>
<keyword id="KW-0694">RNA-binding</keyword>
<keyword id="KW-0699">rRNA-binding</keyword>
<keyword id="KW-0819">tRNA processing</keyword>
<reference key="1">
    <citation type="journal article" date="1997" name="J. Bacteriol.">
        <title>Complete genome sequence of Methanobacterium thermoautotrophicum deltaH: functional analysis and comparative genomics.</title>
        <authorList>
            <person name="Smith D.R."/>
            <person name="Doucette-Stamm L.A."/>
            <person name="Deloughery C."/>
            <person name="Lee H.-M."/>
            <person name="Dubois J."/>
            <person name="Aldredge T."/>
            <person name="Bashirzadeh R."/>
            <person name="Blakely D."/>
            <person name="Cook R."/>
            <person name="Gilbert K."/>
            <person name="Harrison D."/>
            <person name="Hoang L."/>
            <person name="Keagle P."/>
            <person name="Lumm W."/>
            <person name="Pothier B."/>
            <person name="Qiu D."/>
            <person name="Spadafora R."/>
            <person name="Vicare R."/>
            <person name="Wang Y."/>
            <person name="Wierzbowski J."/>
            <person name="Gibson R."/>
            <person name="Jiwani N."/>
            <person name="Caruso A."/>
            <person name="Bush D."/>
            <person name="Safer H."/>
            <person name="Patwell D."/>
            <person name="Prabhakar S."/>
            <person name="McDougall S."/>
            <person name="Shimer G."/>
            <person name="Goyal A."/>
            <person name="Pietrovski S."/>
            <person name="Church G.M."/>
            <person name="Daniels C.J."/>
            <person name="Mao J.-I."/>
            <person name="Rice P."/>
            <person name="Noelling J."/>
            <person name="Reeve J.N."/>
        </authorList>
    </citation>
    <scope>NUCLEOTIDE SEQUENCE [LARGE SCALE GENOMIC DNA]</scope>
    <source>
        <strain>ATCC 29096 / DSM 1053 / JCM 10044 / NBRC 100330 / Delta H</strain>
    </source>
</reference>
<accession>O26355</accession>
<proteinExistence type="inferred from homology"/>
<evidence type="ECO:0000255" key="1">
    <source>
        <dbReference type="HAMAP-Rule" id="MF_00326"/>
    </source>
</evidence>
<evidence type="ECO:0000305" key="2"/>